<gene>
    <name evidence="8" type="primary">AMT6</name>
</gene>
<proteinExistence type="evidence at transcript level"/>
<evidence type="ECO:0000250" key="1">
    <source>
        <dbReference type="UniProtKB" id="K0E689"/>
    </source>
</evidence>
<evidence type="ECO:0000250" key="2">
    <source>
        <dbReference type="UniProtKB" id="O75874"/>
    </source>
</evidence>
<evidence type="ECO:0000250" key="3">
    <source>
        <dbReference type="UniProtKB" id="P50213"/>
    </source>
</evidence>
<evidence type="ECO:0000255" key="4">
    <source>
        <dbReference type="RuleBase" id="RU004445"/>
    </source>
</evidence>
<evidence type="ECO:0000269" key="5">
    <source>
    </source>
</evidence>
<evidence type="ECO:0000269" key="6">
    <source>
    </source>
</evidence>
<evidence type="ECO:0000269" key="7">
    <source>
    </source>
</evidence>
<evidence type="ECO:0000303" key="8">
    <source>
    </source>
</evidence>
<evidence type="ECO:0000303" key="9">
    <source>
    </source>
</evidence>
<evidence type="ECO:0000305" key="10"/>
<evidence type="ECO:0000305" key="11">
    <source>
    </source>
</evidence>
<evidence type="ECO:0000305" key="12">
    <source>
    </source>
</evidence>
<keyword id="KW-0028">Amino-acid biosynthesis</keyword>
<keyword id="KW-0100">Branched-chain amino acid biosynthesis</keyword>
<keyword id="KW-0432">Leucine biosynthesis</keyword>
<keyword id="KW-0460">Magnesium</keyword>
<keyword id="KW-0464">Manganese</keyword>
<keyword id="KW-0479">Metal-binding</keyword>
<keyword id="KW-0520">NAD</keyword>
<keyword id="KW-0521">NADP</keyword>
<keyword id="KW-0560">Oxidoreductase</keyword>
<keyword id="KW-0843">Virulence</keyword>
<accession>C9K7B7</accession>
<reference key="1">
    <citation type="journal article" date="2007" name="Mol. Plant Microbe Interact.">
        <title>Expression profiles of genes encoded by the supernumerary chromosome controlling AM-toxin biosynthesis and pathogenicity in the apple pathotype of Alternaria alternata.</title>
        <authorList>
            <person name="Harimoto Y."/>
            <person name="Hatta R."/>
            <person name="Kodama M."/>
            <person name="Yamamoto M."/>
            <person name="Otani H."/>
            <person name="Tsuge T."/>
        </authorList>
    </citation>
    <scope>NUCLEOTIDE SEQUENCE [GENOMIC DNA]</scope>
    <scope>INDUCTION</scope>
    <scope>PATHWAY</scope>
    <source>
        <strain>NBRC 8984</strain>
    </source>
</reference>
<reference key="2">
    <citation type="journal article" date="2000" name="Mol. Plant Microbe Interact.">
        <title>Cloning and characterization of a cyclic peptide synthetase gene from Alternaria alternata apple pathotype whose product is involved in AM-toxin synthesis and pathogenicity.</title>
        <authorList>
            <person name="Johnson R.D."/>
            <person name="Johnson L."/>
            <person name="Itoh Y."/>
            <person name="Kodama M."/>
            <person name="Otani H."/>
            <person name="Kohmoto K."/>
        </authorList>
    </citation>
    <scope>FUNCTION</scope>
    <source>
        <strain>M-71</strain>
    </source>
</reference>
<reference key="3">
    <citation type="journal article" date="2004" name="Mol. Microbiol.">
        <title>Dissection of the host range of the fungal plant pathogen Alternaria alternata by modification of secondary metabolism.</title>
        <authorList>
            <person name="Ito K."/>
            <person name="Tanaka T."/>
            <person name="Hatta R."/>
            <person name="Yamamoto M."/>
            <person name="Akimitsu K."/>
            <person name="Tsuge T."/>
        </authorList>
    </citation>
    <scope>FUNCTION</scope>
    <source>
        <strain>NBRC 8984</strain>
    </source>
</reference>
<reference key="4">
    <citation type="journal article" date="2013" name="FEMS Microbiol. Rev.">
        <title>Host-selective toxins produced by the plant pathogenic fungus Alternaria alternata.</title>
        <authorList>
            <person name="Tsuge T."/>
            <person name="Harimoto Y."/>
            <person name="Akimitsu K."/>
            <person name="Ohtani K."/>
            <person name="Kodama M."/>
            <person name="Akagi Y."/>
            <person name="Egusa M."/>
            <person name="Yamamoto M."/>
            <person name="Otani H."/>
        </authorList>
    </citation>
    <scope>REVIEW ON HOST-SELECTIVE TOXINS</scope>
</reference>
<protein>
    <recommendedName>
        <fullName evidence="1">3-isopropylmalate dehydrogenase AMT6</fullName>
        <ecNumber evidence="4">1.1.1.85</ecNumber>
    </recommendedName>
    <alternativeName>
        <fullName evidence="8">AM-toxin biosynthesis protein 6</fullName>
    </alternativeName>
</protein>
<name>AMT6_ALTAL</name>
<feature type="chain" id="PRO_0000444856" description="3-isopropylmalate dehydrogenase AMT6">
    <location>
        <begin position="1"/>
        <end position="373"/>
    </location>
</feature>
<feature type="binding site" evidence="2">
    <location>
        <begin position="77"/>
        <end position="79"/>
    </location>
    <ligand>
        <name>NADP(+)</name>
        <dbReference type="ChEBI" id="CHEBI:58349"/>
    </ligand>
</feature>
<feature type="binding site" evidence="2">
    <location>
        <position position="97"/>
    </location>
    <ligand>
        <name>substrate</name>
    </ligand>
</feature>
<feature type="binding site" evidence="3">
    <location>
        <position position="136"/>
    </location>
    <ligand>
        <name>substrate</name>
    </ligand>
</feature>
<feature type="binding site" evidence="3">
    <location>
        <position position="227"/>
    </location>
    <ligand>
        <name>Mg(2+)</name>
        <dbReference type="ChEBI" id="CHEBI:18420"/>
    </ligand>
</feature>
<feature type="binding site" evidence="3">
    <location>
        <position position="252"/>
    </location>
    <ligand>
        <name>Mg(2+)</name>
        <dbReference type="ChEBI" id="CHEBI:18420"/>
    </ligand>
</feature>
<feature type="binding site" evidence="3">
    <location>
        <position position="256"/>
    </location>
    <ligand>
        <name>Mg(2+)</name>
        <dbReference type="ChEBI" id="CHEBI:18420"/>
    </ligand>
</feature>
<feature type="binding site" evidence="2">
    <location>
        <begin position="284"/>
        <end position="289"/>
    </location>
    <ligand>
        <name>NADP(+)</name>
        <dbReference type="ChEBI" id="CHEBI:58349"/>
    </ligand>
</feature>
<feature type="site" description="Critical for catalysis" evidence="3">
    <location>
        <position position="143"/>
    </location>
</feature>
<feature type="site" description="Critical for catalysis" evidence="3">
    <location>
        <position position="193"/>
    </location>
</feature>
<sequence>MKTAHTIVVFGGDYCGPEVMKEGLKVLSEIERQNPDVKLELIHHLVGGAAWDVHGENITTAALSDATSASAVLLGAVGGPKWAKHAIPVEWGLGRLRKALDAFGNLRPVNFAAPSLISRSSLKPKVCTGTEILIVRELTGGVYFGPRSEHDGSFDQASDTDVYTRKEIERVTRLAGSLAMARDPPLAVTSLDKANVLAACGRLWRGVVSEVMAAEFPEIELRHMLIDSAAMVMALNPTKLNGVVLASNMFGDIISDQASAIPGSIGLLPSASLCSIPERGQESSRIRGLYEPIHGSAPDIAGKGIVNPIGMILSVAMMCRLSLDMGAAATSIEAAVRDTLEVGICTPDIGGTASTSEVGDAVVAALVRIFDKH</sequence>
<dbReference type="EC" id="1.1.1.85" evidence="4"/>
<dbReference type="EMBL" id="AB525198">
    <property type="protein sequence ID" value="BAI44741.1"/>
    <property type="molecule type" value="Genomic_DNA"/>
</dbReference>
<dbReference type="EMBL" id="AB525199">
    <property type="protein sequence ID" value="BAI44763.1"/>
    <property type="molecule type" value="Genomic_DNA"/>
</dbReference>
<dbReference type="EMBL" id="AB525200">
    <property type="protein sequence ID" value="BAI44805.1"/>
    <property type="molecule type" value="Genomic_DNA"/>
</dbReference>
<dbReference type="SMR" id="C9K7B7"/>
<dbReference type="VEuPathDB" id="FungiDB:CC77DRAFT_1091958"/>
<dbReference type="UniPathway" id="UPA00048">
    <property type="reaction ID" value="UER00072"/>
</dbReference>
<dbReference type="GO" id="GO:0005829">
    <property type="term" value="C:cytosol"/>
    <property type="evidence" value="ECO:0007669"/>
    <property type="project" value="TreeGrafter"/>
</dbReference>
<dbReference type="GO" id="GO:0003862">
    <property type="term" value="F:3-isopropylmalate dehydrogenase activity"/>
    <property type="evidence" value="ECO:0007669"/>
    <property type="project" value="UniProtKB-EC"/>
</dbReference>
<dbReference type="GO" id="GO:0000287">
    <property type="term" value="F:magnesium ion binding"/>
    <property type="evidence" value="ECO:0007669"/>
    <property type="project" value="InterPro"/>
</dbReference>
<dbReference type="GO" id="GO:0051287">
    <property type="term" value="F:NAD binding"/>
    <property type="evidence" value="ECO:0007669"/>
    <property type="project" value="InterPro"/>
</dbReference>
<dbReference type="GO" id="GO:0009098">
    <property type="term" value="P:L-leucine biosynthetic process"/>
    <property type="evidence" value="ECO:0007669"/>
    <property type="project" value="UniProtKB-UniPathway"/>
</dbReference>
<dbReference type="FunFam" id="3.40.718.10:FF:000006">
    <property type="entry name" value="3-isopropylmalate dehydrogenase"/>
    <property type="match status" value="1"/>
</dbReference>
<dbReference type="Gene3D" id="3.40.718.10">
    <property type="entry name" value="Isopropylmalate Dehydrogenase"/>
    <property type="match status" value="1"/>
</dbReference>
<dbReference type="InterPro" id="IPR019818">
    <property type="entry name" value="IsoCit/isopropylmalate_DH_CS"/>
</dbReference>
<dbReference type="InterPro" id="IPR024084">
    <property type="entry name" value="IsoPropMal-DH-like_dom"/>
</dbReference>
<dbReference type="InterPro" id="IPR004429">
    <property type="entry name" value="Isopropylmalate_DH"/>
</dbReference>
<dbReference type="NCBIfam" id="TIGR00169">
    <property type="entry name" value="leuB"/>
    <property type="match status" value="1"/>
</dbReference>
<dbReference type="PANTHER" id="PTHR42979">
    <property type="entry name" value="3-ISOPROPYLMALATE DEHYDROGENASE"/>
    <property type="match status" value="1"/>
</dbReference>
<dbReference type="PANTHER" id="PTHR42979:SF4">
    <property type="entry name" value="3-ISOPROPYLMALATE DEHYDROGENASE"/>
    <property type="match status" value="1"/>
</dbReference>
<dbReference type="Pfam" id="PF00180">
    <property type="entry name" value="Iso_dh"/>
    <property type="match status" value="1"/>
</dbReference>
<dbReference type="SMART" id="SM01329">
    <property type="entry name" value="Iso_dh"/>
    <property type="match status" value="1"/>
</dbReference>
<dbReference type="SUPFAM" id="SSF53659">
    <property type="entry name" value="Isocitrate/Isopropylmalate dehydrogenase-like"/>
    <property type="match status" value="1"/>
</dbReference>
<dbReference type="PROSITE" id="PS00470">
    <property type="entry name" value="IDH_IMDH"/>
    <property type="match status" value="1"/>
</dbReference>
<comment type="function">
    <text evidence="5 6 7 9 11 12">3-isopropylmalate dehydrogenase; part of the gene clusters that mediate the biosynthesis of AM-toxins, host-selective toxins (HSTs) causing Alternaria blotch on apple, a worldwide distributed disease (Probable). AM-toxins are cyclic depsipeptides containing the 3 residues 2-hydroxy-isovaleric acid (2-HIV), dehydroalanine, L-alanine which are common for all 3 AM-toxins I to III. The fourth precursor is L-alpha-amino-methoxyphenyl-valeric acid (L-Amv) for AM-toxin I, L-alpha-amino-phenyl-valeric acid (L-Apv) for AM-toxin II, and L-alpha-amino-hydroxyphenyl-valeric acid (L-Ahv) for AM-toxin III (Probable). AM-toxins have two target sites for affecting susceptible apple cells; they cause invagination of the plasma membrane and electrolyte loss and chloroplast disorganization (PubMed:22846083). The non-ribosomal peptide synthetase AMT1 contains 4 catalytic modules and is responsible for activation of each residue in AM-toxin (PubMed:10875335). The aldo-keto reductase AMT2 catalyzes the conversion of 2-keto-isovaleric acid (2-KIV) to 2-hydroxy-isovaleric acid (2-HIV), one of the precursor residues incorporated by AMT1 during AM-toxin biosynthesis, by reduction of its ketone to an alcohol (PubMed:15066029). The cytochrome P450 monooxygenase AMT3 and the thioesterase AMT4 are also important for AM-toxin production, but their exact function within the AM-toxin biosynthesis are not known yet (PubMed:17990954). Up to 21 proteins (including AMT1 to AMT4) are predicted to be involved in AM-toxin biosynthesis since their expression ishighly up-regulated in AM-toxin-producing cultures (PubMed:17990954).</text>
</comment>
<comment type="catalytic activity">
    <reaction evidence="4">
        <text>(2R,3S)-3-isopropylmalate + NAD(+) = 4-methyl-2-oxopentanoate + CO2 + NADH</text>
        <dbReference type="Rhea" id="RHEA:32271"/>
        <dbReference type="ChEBI" id="CHEBI:16526"/>
        <dbReference type="ChEBI" id="CHEBI:17865"/>
        <dbReference type="ChEBI" id="CHEBI:35121"/>
        <dbReference type="ChEBI" id="CHEBI:57540"/>
        <dbReference type="ChEBI" id="CHEBI:57945"/>
        <dbReference type="EC" id="1.1.1.85"/>
    </reaction>
</comment>
<comment type="cofactor">
    <cofactor evidence="4">
        <name>Mg(2+)</name>
        <dbReference type="ChEBI" id="CHEBI:18420"/>
    </cofactor>
    <cofactor evidence="4">
        <name>Mn(2+)</name>
        <dbReference type="ChEBI" id="CHEBI:29035"/>
    </cofactor>
    <text evidence="4">Binds 1 Mg(2+) or Mn(2+) ion per subunit.</text>
</comment>
<comment type="pathway">
    <text evidence="4">Amino-acid biosynthesis; L-leucine biosynthesis; L-leucine from 3-methyl-2-oxobutanoate: step 3/4.</text>
</comment>
<comment type="pathway">
    <text evidence="12">Mycotoxin biosynthesis.</text>
</comment>
<comment type="subunit">
    <text evidence="4">Homodimer.</text>
</comment>
<comment type="induction">
    <text evidence="7">Expression is up-regulated more than 10 fold in toxin producing cultures.</text>
</comment>
<comment type="miscellaneous">
    <text evidence="7">Gene clusters encoding host-selective toxins (HSTs) are localized on conditionally dispensable chromosomes (CDCs), also called supernumerary chromosomes, where they are present in multiple copies (PubMed:17990954). The CDCs are not essential for saprophytic growth but controls host-selective pathogenicity (PubMed:17990954).</text>
</comment>
<comment type="similarity">
    <text evidence="10">Belongs to the isocitrate and isopropylmalate dehydrogenases family.</text>
</comment>
<organism>
    <name type="scientific">Alternaria alternata</name>
    <name type="common">Alternaria rot fungus</name>
    <name type="synonym">Torula alternata</name>
    <dbReference type="NCBI Taxonomy" id="5599"/>
    <lineage>
        <taxon>Eukaryota</taxon>
        <taxon>Fungi</taxon>
        <taxon>Dikarya</taxon>
        <taxon>Ascomycota</taxon>
        <taxon>Pezizomycotina</taxon>
        <taxon>Dothideomycetes</taxon>
        <taxon>Pleosporomycetidae</taxon>
        <taxon>Pleosporales</taxon>
        <taxon>Pleosporineae</taxon>
        <taxon>Pleosporaceae</taxon>
        <taxon>Alternaria</taxon>
        <taxon>Alternaria sect. Alternaria</taxon>
        <taxon>Alternaria alternata complex</taxon>
    </lineage>
</organism>